<comment type="catalytic activity">
    <reaction evidence="2">
        <text>(2R)-3-phosphoglycerate + ATP = (2R)-3-phospho-glyceroyl phosphate + ADP</text>
        <dbReference type="Rhea" id="RHEA:14801"/>
        <dbReference type="ChEBI" id="CHEBI:30616"/>
        <dbReference type="ChEBI" id="CHEBI:57604"/>
        <dbReference type="ChEBI" id="CHEBI:58272"/>
        <dbReference type="ChEBI" id="CHEBI:456216"/>
        <dbReference type="EC" id="2.7.2.3"/>
    </reaction>
</comment>
<comment type="cofactor">
    <cofactor evidence="2">
        <name>Mg(2+)</name>
        <dbReference type="ChEBI" id="CHEBI:18420"/>
    </cofactor>
</comment>
<comment type="pathway">
    <text>Carbohydrate biosynthesis; Calvin cycle.</text>
</comment>
<comment type="subunit">
    <text evidence="1">Monomer.</text>
</comment>
<comment type="subcellular location">
    <subcellularLocation>
        <location>Plastid</location>
        <location>Chloroplast</location>
    </subcellularLocation>
</comment>
<comment type="similarity">
    <text evidence="5">Belongs to the phosphoglycerate kinase family.</text>
</comment>
<reference key="1">
    <citation type="online journal article" date="1995" name="Plant Gene Register">
        <title>Nucleotide sequences of cDNAs encoding the chloroplastic and cytosolic phosphoglycerate kinases from tobacco.</title>
        <authorList>
            <person name="Rao S.K."/>
            <person name="Bringloe D.H."/>
            <person name="Dyer T.A."/>
            <person name="Raines C.A."/>
            <person name="Bradbeer J.W."/>
        </authorList>
        <locator>PGR95-090</locator>
    </citation>
    <scope>NUCLEOTIDE SEQUENCE [MRNA]</scope>
    <source>
        <strain>cv. Samsun</strain>
        <tissue>Leaf</tissue>
    </source>
</reference>
<name>PGKH_TOBAC</name>
<sequence length="481" mass="50177">MASATASHTLCGIPATSSSTTNKAIAPSSARFLAKTPLRRLGFAGAAADSLFTNHVATKLRSLKSSSKPIRGVASMAKKSVGDLTAAELKGKKVFVRADLNVPLDDNQNITDDTRIRAAVPTIKHLMANGAKVILSSHLGRPKGVTPKYSLAPLVPRLSELLGIQVVKVEDCIGPEVEKLVASLPEGGVLLLENVRFYKEEEKNEPEFAKKLASLADLYVNDAFGTAHRAHASTEGVTKFLKPSVAGFLLQKELDYLVGAVSNPKRPFAAIVGGSKVSSKIGVIESLLEKCDILLLGGGMIFTFYKAQGLSVGSSLVEEDKLELATSLLEKAKAKGVSLLLPSDVVIADKFAPDANSKIVPASAIPDGWMGLDIGPDSVKTFNDALDTTKTVIWNGPMGVFEFDKFAVGTEAIAKKLADLSGKGVTTIIGGGDSVAAVEKVGVASVMSHISTGGGASLELLEGKVLPGVIALDEADAPVAV</sequence>
<organism>
    <name type="scientific">Nicotiana tabacum</name>
    <name type="common">Common tobacco</name>
    <dbReference type="NCBI Taxonomy" id="4097"/>
    <lineage>
        <taxon>Eukaryota</taxon>
        <taxon>Viridiplantae</taxon>
        <taxon>Streptophyta</taxon>
        <taxon>Embryophyta</taxon>
        <taxon>Tracheophyta</taxon>
        <taxon>Spermatophyta</taxon>
        <taxon>Magnoliopsida</taxon>
        <taxon>eudicotyledons</taxon>
        <taxon>Gunneridae</taxon>
        <taxon>Pentapetalae</taxon>
        <taxon>asterids</taxon>
        <taxon>lamiids</taxon>
        <taxon>Solanales</taxon>
        <taxon>Solanaceae</taxon>
        <taxon>Nicotianoideae</taxon>
        <taxon>Nicotianeae</taxon>
        <taxon>Nicotiana</taxon>
    </lineage>
</organism>
<dbReference type="EC" id="2.7.2.3" evidence="2"/>
<dbReference type="EMBL" id="Z48977">
    <property type="protein sequence ID" value="CAA88841.1"/>
    <property type="molecule type" value="mRNA"/>
</dbReference>
<dbReference type="PIR" id="T03660">
    <property type="entry name" value="T03660"/>
</dbReference>
<dbReference type="SMR" id="Q42961"/>
<dbReference type="STRING" id="4097.Q42961"/>
<dbReference type="PaxDb" id="4097-Q42961"/>
<dbReference type="ProMEX" id="Q42961"/>
<dbReference type="UniPathway" id="UPA00116"/>
<dbReference type="Proteomes" id="UP000084051">
    <property type="component" value="Unplaced"/>
</dbReference>
<dbReference type="GO" id="GO:0009507">
    <property type="term" value="C:chloroplast"/>
    <property type="evidence" value="ECO:0007669"/>
    <property type="project" value="UniProtKB-SubCell"/>
</dbReference>
<dbReference type="GO" id="GO:0005829">
    <property type="term" value="C:cytosol"/>
    <property type="evidence" value="ECO:0000318"/>
    <property type="project" value="GO_Central"/>
</dbReference>
<dbReference type="GO" id="GO:0043531">
    <property type="term" value="F:ADP binding"/>
    <property type="evidence" value="ECO:0000318"/>
    <property type="project" value="GO_Central"/>
</dbReference>
<dbReference type="GO" id="GO:0005524">
    <property type="term" value="F:ATP binding"/>
    <property type="evidence" value="ECO:0000318"/>
    <property type="project" value="GO_Central"/>
</dbReference>
<dbReference type="GO" id="GO:0046872">
    <property type="term" value="F:metal ion binding"/>
    <property type="evidence" value="ECO:0007669"/>
    <property type="project" value="UniProtKB-KW"/>
</dbReference>
<dbReference type="GO" id="GO:0004618">
    <property type="term" value="F:phosphoglycerate kinase activity"/>
    <property type="evidence" value="ECO:0000318"/>
    <property type="project" value="GO_Central"/>
</dbReference>
<dbReference type="GO" id="GO:0006094">
    <property type="term" value="P:gluconeogenesis"/>
    <property type="evidence" value="ECO:0000318"/>
    <property type="project" value="GO_Central"/>
</dbReference>
<dbReference type="GO" id="GO:0006096">
    <property type="term" value="P:glycolytic process"/>
    <property type="evidence" value="ECO:0000318"/>
    <property type="project" value="GO_Central"/>
</dbReference>
<dbReference type="GO" id="GO:0019253">
    <property type="term" value="P:reductive pentose-phosphate cycle"/>
    <property type="evidence" value="ECO:0007669"/>
    <property type="project" value="UniProtKB-UniPathway"/>
</dbReference>
<dbReference type="CDD" id="cd00318">
    <property type="entry name" value="Phosphoglycerate_kinase"/>
    <property type="match status" value="1"/>
</dbReference>
<dbReference type="FunFam" id="3.40.50.1260:FF:000003">
    <property type="entry name" value="Phosphoglycerate kinase"/>
    <property type="match status" value="1"/>
</dbReference>
<dbReference type="FunFam" id="3.40.50.1260:FF:000006">
    <property type="entry name" value="Phosphoglycerate kinase"/>
    <property type="match status" value="1"/>
</dbReference>
<dbReference type="FunFam" id="3.40.50.1260:FF:000017">
    <property type="entry name" value="Phosphoglycerate kinase"/>
    <property type="match status" value="1"/>
</dbReference>
<dbReference type="Gene3D" id="3.40.50.1260">
    <property type="entry name" value="Phosphoglycerate kinase, N-terminal domain"/>
    <property type="match status" value="3"/>
</dbReference>
<dbReference type="HAMAP" id="MF_00145">
    <property type="entry name" value="Phosphoglyc_kinase"/>
    <property type="match status" value="1"/>
</dbReference>
<dbReference type="InterPro" id="IPR001576">
    <property type="entry name" value="Phosphoglycerate_kinase"/>
</dbReference>
<dbReference type="InterPro" id="IPR015911">
    <property type="entry name" value="Phosphoglycerate_kinase_CS"/>
</dbReference>
<dbReference type="InterPro" id="IPR015824">
    <property type="entry name" value="Phosphoglycerate_kinase_N"/>
</dbReference>
<dbReference type="InterPro" id="IPR036043">
    <property type="entry name" value="Phosphoglycerate_kinase_sf"/>
</dbReference>
<dbReference type="PANTHER" id="PTHR11406">
    <property type="entry name" value="PHOSPHOGLYCERATE KINASE"/>
    <property type="match status" value="1"/>
</dbReference>
<dbReference type="PANTHER" id="PTHR11406:SF23">
    <property type="entry name" value="PHOSPHOGLYCERATE KINASE 1, CHLOROPLASTIC-RELATED"/>
    <property type="match status" value="1"/>
</dbReference>
<dbReference type="Pfam" id="PF00162">
    <property type="entry name" value="PGK"/>
    <property type="match status" value="1"/>
</dbReference>
<dbReference type="PIRSF" id="PIRSF000724">
    <property type="entry name" value="Pgk"/>
    <property type="match status" value="1"/>
</dbReference>
<dbReference type="PRINTS" id="PR00477">
    <property type="entry name" value="PHGLYCKINASE"/>
</dbReference>
<dbReference type="SUPFAM" id="SSF53748">
    <property type="entry name" value="Phosphoglycerate kinase"/>
    <property type="match status" value="1"/>
</dbReference>
<dbReference type="PROSITE" id="PS00111">
    <property type="entry name" value="PGLYCERATE_KINASE"/>
    <property type="match status" value="1"/>
</dbReference>
<evidence type="ECO:0000250" key="1"/>
<evidence type="ECO:0000250" key="2">
    <source>
        <dbReference type="UniProtKB" id="P00558"/>
    </source>
</evidence>
<evidence type="ECO:0000250" key="3">
    <source>
        <dbReference type="UniProtKB" id="Q7SIB7"/>
    </source>
</evidence>
<evidence type="ECO:0000255" key="4"/>
<evidence type="ECO:0000305" key="5"/>
<feature type="transit peptide" description="Chloroplast" evidence="4">
    <location>
        <begin position="1"/>
        <end position="75"/>
    </location>
</feature>
<feature type="chain" id="PRO_0000023892" description="Phosphoglycerate kinase, chloroplastic">
    <location>
        <begin position="76"/>
        <end position="481"/>
    </location>
</feature>
<feature type="binding site" evidence="2">
    <location>
        <position position="98"/>
    </location>
    <ligand>
        <name>(2R)-3-phosphoglycerate</name>
        <dbReference type="ChEBI" id="CHEBI:58272"/>
    </ligand>
</feature>
<feature type="binding site" evidence="3">
    <location>
        <position position="99"/>
    </location>
    <ligand>
        <name>(2R)-3-phosphoglycerate</name>
        <dbReference type="ChEBI" id="CHEBI:58272"/>
    </ligand>
</feature>
<feature type="binding site" evidence="3">
    <location>
        <position position="101"/>
    </location>
    <ligand>
        <name>(2R)-3-phosphoglycerate</name>
        <dbReference type="ChEBI" id="CHEBI:58272"/>
    </ligand>
</feature>
<feature type="binding site" evidence="3">
    <location>
        <position position="115"/>
    </location>
    <ligand>
        <name>(2R)-3-phosphoglycerate</name>
        <dbReference type="ChEBI" id="CHEBI:58272"/>
    </ligand>
</feature>
<feature type="binding site" evidence="2">
    <location>
        <position position="137"/>
    </location>
    <ligand>
        <name>(2R)-3-phosphoglycerate</name>
        <dbReference type="ChEBI" id="CHEBI:58272"/>
    </ligand>
</feature>
<feature type="binding site" evidence="3">
    <location>
        <position position="138"/>
    </location>
    <ligand>
        <name>(2R)-3-phosphoglycerate</name>
        <dbReference type="ChEBI" id="CHEBI:58272"/>
    </ligand>
</feature>
<feature type="binding site" evidence="2">
    <location>
        <position position="140"/>
    </location>
    <ligand>
        <name>(2R)-3-phosphoglycerate</name>
        <dbReference type="ChEBI" id="CHEBI:58272"/>
    </ligand>
</feature>
<feature type="binding site" evidence="3">
    <location>
        <position position="141"/>
    </location>
    <ligand>
        <name>(2R)-3-phosphoglycerate</name>
        <dbReference type="ChEBI" id="CHEBI:58272"/>
    </ligand>
</feature>
<feature type="binding site" evidence="3">
    <location>
        <position position="196"/>
    </location>
    <ligand>
        <name>(2R)-3-phosphoglycerate</name>
        <dbReference type="ChEBI" id="CHEBI:58272"/>
    </ligand>
</feature>
<feature type="binding site" evidence="2">
    <location>
        <position position="228"/>
    </location>
    <ligand>
        <name>(2R)-3-phosphoglycerate</name>
        <dbReference type="ChEBI" id="CHEBI:58272"/>
    </ligand>
</feature>
<feature type="binding site" evidence="3">
    <location>
        <position position="229"/>
    </location>
    <ligand>
        <name>(2R)-3-phosphoglycerate</name>
        <dbReference type="ChEBI" id="CHEBI:58272"/>
    </ligand>
</feature>
<feature type="binding site" evidence="2">
    <location>
        <position position="274"/>
    </location>
    <ligand>
        <name>ADP</name>
        <dbReference type="ChEBI" id="CHEBI:456216"/>
    </ligand>
</feature>
<feature type="binding site" evidence="2">
    <location>
        <position position="274"/>
    </location>
    <ligand>
        <name>CDP</name>
        <dbReference type="ChEBI" id="CHEBI:58069"/>
    </ligand>
</feature>
<feature type="binding site" evidence="3">
    <location>
        <position position="276"/>
    </location>
    <ligand>
        <name>AMP</name>
        <dbReference type="ChEBI" id="CHEBI:456215"/>
    </ligand>
</feature>
<feature type="binding site" evidence="3">
    <location>
        <position position="280"/>
    </location>
    <ligand>
        <name>AMP</name>
        <dbReference type="ChEBI" id="CHEBI:456215"/>
    </ligand>
</feature>
<feature type="binding site" evidence="3">
    <location>
        <position position="280"/>
    </location>
    <ligand>
        <name>ATP</name>
        <dbReference type="ChEBI" id="CHEBI:30616"/>
    </ligand>
</feature>
<feature type="binding site" evidence="2">
    <location>
        <position position="298"/>
    </location>
    <ligand>
        <name>ADP</name>
        <dbReference type="ChEBI" id="CHEBI:456216"/>
    </ligand>
</feature>
<feature type="binding site" evidence="2">
    <location>
        <position position="298"/>
    </location>
    <ligand>
        <name>CDP</name>
        <dbReference type="ChEBI" id="CHEBI:58069"/>
    </ligand>
</feature>
<feature type="binding site" evidence="3">
    <location>
        <position position="299"/>
    </location>
    <ligand>
        <name>AMP</name>
        <dbReference type="ChEBI" id="CHEBI:456215"/>
    </ligand>
</feature>
<feature type="binding site" evidence="3">
    <location>
        <position position="299"/>
    </location>
    <ligand>
        <name>ATP</name>
        <dbReference type="ChEBI" id="CHEBI:30616"/>
    </ligand>
</feature>
<feature type="binding site" evidence="3">
    <location>
        <position position="371"/>
    </location>
    <ligand>
        <name>AMP</name>
        <dbReference type="ChEBI" id="CHEBI:456215"/>
    </ligand>
</feature>
<feature type="binding site" evidence="3">
    <location>
        <position position="371"/>
    </location>
    <ligand>
        <name>ATP</name>
        <dbReference type="ChEBI" id="CHEBI:30616"/>
    </ligand>
</feature>
<feature type="binding site" evidence="2">
    <location>
        <position position="396"/>
    </location>
    <ligand>
        <name>CDP</name>
        <dbReference type="ChEBI" id="CHEBI:58069"/>
    </ligand>
</feature>
<feature type="binding site" evidence="2">
    <location>
        <position position="401"/>
    </location>
    <ligand>
        <name>ADP</name>
        <dbReference type="ChEBI" id="CHEBI:456216"/>
    </ligand>
</feature>
<feature type="binding site" evidence="2">
    <location>
        <position position="401"/>
    </location>
    <ligand>
        <name>CDP</name>
        <dbReference type="ChEBI" id="CHEBI:58069"/>
    </ligand>
</feature>
<feature type="binding site" evidence="3">
    <location>
        <position position="402"/>
    </location>
    <ligand>
        <name>AMP</name>
        <dbReference type="ChEBI" id="CHEBI:456215"/>
    </ligand>
</feature>
<feature type="binding site" evidence="3">
    <location>
        <position position="402"/>
    </location>
    <ligand>
        <name>ATP</name>
        <dbReference type="ChEBI" id="CHEBI:30616"/>
    </ligand>
</feature>
<feature type="binding site" evidence="3">
    <location>
        <position position="433"/>
    </location>
    <ligand>
        <name>ATP</name>
        <dbReference type="ChEBI" id="CHEBI:30616"/>
    </ligand>
</feature>
<feature type="binding site" evidence="3">
    <location>
        <position position="433"/>
    </location>
    <ligand>
        <name>Mg(2+)</name>
        <dbReference type="ChEBI" id="CHEBI:18420"/>
    </ligand>
</feature>
<feature type="binding site" evidence="3">
    <location>
        <position position="434"/>
    </location>
    <ligand>
        <name>ATP</name>
        <dbReference type="ChEBI" id="CHEBI:30616"/>
    </ligand>
</feature>
<keyword id="KW-0067">ATP-binding</keyword>
<keyword id="KW-0113">Calvin cycle</keyword>
<keyword id="KW-0150">Chloroplast</keyword>
<keyword id="KW-0418">Kinase</keyword>
<keyword id="KW-0460">Magnesium</keyword>
<keyword id="KW-0479">Metal-binding</keyword>
<keyword id="KW-0547">Nucleotide-binding</keyword>
<keyword id="KW-0934">Plastid</keyword>
<keyword id="KW-1185">Reference proteome</keyword>
<keyword id="KW-0808">Transferase</keyword>
<keyword id="KW-0809">Transit peptide</keyword>
<protein>
    <recommendedName>
        <fullName>Phosphoglycerate kinase, chloroplastic</fullName>
        <ecNumber evidence="2">2.7.2.3</ecNumber>
    </recommendedName>
</protein>
<accession>Q42961</accession>
<proteinExistence type="evidence at transcript level"/>